<comment type="similarity">
    <text evidence="1">Belongs to the bacterial ribosomal protein bL35 family.</text>
</comment>
<protein>
    <recommendedName>
        <fullName evidence="1">Large ribosomal subunit protein bL35</fullName>
    </recommendedName>
    <alternativeName>
        <fullName evidence="2">50S ribosomal protein L35</fullName>
    </alternativeName>
</protein>
<organism>
    <name type="scientific">Geobacter sp. (strain M21)</name>
    <dbReference type="NCBI Taxonomy" id="443144"/>
    <lineage>
        <taxon>Bacteria</taxon>
        <taxon>Pseudomonadati</taxon>
        <taxon>Thermodesulfobacteriota</taxon>
        <taxon>Desulfuromonadia</taxon>
        <taxon>Geobacterales</taxon>
        <taxon>Geobacteraceae</taxon>
        <taxon>Geobacter</taxon>
    </lineage>
</organism>
<feature type="chain" id="PRO_1000211705" description="Large ribosomal subunit protein bL35">
    <location>
        <begin position="1"/>
        <end position="65"/>
    </location>
</feature>
<gene>
    <name evidence="1" type="primary">rpmI</name>
    <name type="ordered locus">GM21_2228</name>
</gene>
<reference key="1">
    <citation type="submission" date="2009-07" db="EMBL/GenBank/DDBJ databases">
        <title>Complete sequence of Geobacter sp. M21.</title>
        <authorList>
            <consortium name="US DOE Joint Genome Institute"/>
            <person name="Lucas S."/>
            <person name="Copeland A."/>
            <person name="Lapidus A."/>
            <person name="Glavina del Rio T."/>
            <person name="Dalin E."/>
            <person name="Tice H."/>
            <person name="Bruce D."/>
            <person name="Goodwin L."/>
            <person name="Pitluck S."/>
            <person name="Saunders E."/>
            <person name="Brettin T."/>
            <person name="Detter J.C."/>
            <person name="Han C."/>
            <person name="Larimer F."/>
            <person name="Land M."/>
            <person name="Hauser L."/>
            <person name="Kyrpides N."/>
            <person name="Ovchinnikova G."/>
            <person name="Lovley D."/>
        </authorList>
    </citation>
    <scope>NUCLEOTIDE SEQUENCE [LARGE SCALE GENOMIC DNA]</scope>
    <source>
        <strain>M21</strain>
    </source>
</reference>
<keyword id="KW-0687">Ribonucleoprotein</keyword>
<keyword id="KW-0689">Ribosomal protein</keyword>
<accession>C6DYJ3</accession>
<sequence length="65" mass="7250">MPKMKTHRGAAKRFSKTGTGKIKMAHAFTSHILTSKTRKNKRNLRKGGIVAASDHKNISCLIPYK</sequence>
<evidence type="ECO:0000255" key="1">
    <source>
        <dbReference type="HAMAP-Rule" id="MF_00514"/>
    </source>
</evidence>
<evidence type="ECO:0000305" key="2"/>
<dbReference type="EMBL" id="CP001661">
    <property type="protein sequence ID" value="ACT18277.1"/>
    <property type="molecule type" value="Genomic_DNA"/>
</dbReference>
<dbReference type="SMR" id="C6DYJ3"/>
<dbReference type="STRING" id="443144.GM21_2228"/>
<dbReference type="KEGG" id="gem:GM21_2228"/>
<dbReference type="eggNOG" id="COG0291">
    <property type="taxonomic scope" value="Bacteria"/>
</dbReference>
<dbReference type="HOGENOM" id="CLU_169643_4_3_7"/>
<dbReference type="OrthoDB" id="9804851at2"/>
<dbReference type="GO" id="GO:0022625">
    <property type="term" value="C:cytosolic large ribosomal subunit"/>
    <property type="evidence" value="ECO:0007669"/>
    <property type="project" value="TreeGrafter"/>
</dbReference>
<dbReference type="GO" id="GO:0003735">
    <property type="term" value="F:structural constituent of ribosome"/>
    <property type="evidence" value="ECO:0007669"/>
    <property type="project" value="InterPro"/>
</dbReference>
<dbReference type="GO" id="GO:0006412">
    <property type="term" value="P:translation"/>
    <property type="evidence" value="ECO:0007669"/>
    <property type="project" value="UniProtKB-UniRule"/>
</dbReference>
<dbReference type="FunFam" id="4.10.410.60:FF:000001">
    <property type="entry name" value="50S ribosomal protein L35"/>
    <property type="match status" value="1"/>
</dbReference>
<dbReference type="Gene3D" id="4.10.410.60">
    <property type="match status" value="1"/>
</dbReference>
<dbReference type="HAMAP" id="MF_00514">
    <property type="entry name" value="Ribosomal_bL35"/>
    <property type="match status" value="1"/>
</dbReference>
<dbReference type="InterPro" id="IPR001706">
    <property type="entry name" value="Ribosomal_bL35"/>
</dbReference>
<dbReference type="InterPro" id="IPR021137">
    <property type="entry name" value="Ribosomal_bL35-like"/>
</dbReference>
<dbReference type="InterPro" id="IPR018265">
    <property type="entry name" value="Ribosomal_bL35_CS"/>
</dbReference>
<dbReference type="InterPro" id="IPR037229">
    <property type="entry name" value="Ribosomal_bL35_sf"/>
</dbReference>
<dbReference type="NCBIfam" id="TIGR00001">
    <property type="entry name" value="rpmI_bact"/>
    <property type="match status" value="1"/>
</dbReference>
<dbReference type="PANTHER" id="PTHR33343">
    <property type="entry name" value="54S RIBOSOMAL PROTEIN BL35M"/>
    <property type="match status" value="1"/>
</dbReference>
<dbReference type="PANTHER" id="PTHR33343:SF1">
    <property type="entry name" value="LARGE RIBOSOMAL SUBUNIT PROTEIN BL35M"/>
    <property type="match status" value="1"/>
</dbReference>
<dbReference type="Pfam" id="PF01632">
    <property type="entry name" value="Ribosomal_L35p"/>
    <property type="match status" value="1"/>
</dbReference>
<dbReference type="PRINTS" id="PR00064">
    <property type="entry name" value="RIBOSOMALL35"/>
</dbReference>
<dbReference type="SUPFAM" id="SSF143034">
    <property type="entry name" value="L35p-like"/>
    <property type="match status" value="1"/>
</dbReference>
<dbReference type="PROSITE" id="PS00936">
    <property type="entry name" value="RIBOSOMAL_L35"/>
    <property type="match status" value="1"/>
</dbReference>
<proteinExistence type="inferred from homology"/>
<name>RL35_GEOSM</name>